<comment type="function">
    <text>This protein functions as a defense against chitin containing fungal pathogens.</text>
</comment>
<comment type="catalytic activity">
    <reaction>
        <text>Random endo-hydrolysis of N-acetyl-beta-D-glucosaminide (1-&gt;4)-beta-linkages in chitin and chitodextrins.</text>
        <dbReference type="EC" id="3.2.1.14"/>
    </reaction>
</comment>
<comment type="subcellular location">
    <subcellularLocation>
        <location>Secreted</location>
        <location>Extracellular space</location>
    </subcellularLocation>
    <text>Intercellular space of infected plants.</text>
</comment>
<comment type="induction">
    <text>Expression of the acidic chitinase gene was not detected in normal, untreated plants nor in plants treated with ethylene or salicylic acid.</text>
</comment>
<comment type="similarity">
    <text evidence="3">Belongs to the glycosyl hydrolase 18 family. Chitinase class III subfamily.</text>
</comment>
<gene>
    <name type="primary">CHIB1</name>
    <name type="ordered locus">At5g24090</name>
    <name type="ORF">MZF18.2</name>
</gene>
<dbReference type="EC" id="3.2.1.14"/>
<dbReference type="EMBL" id="M34107">
    <property type="protein sequence ID" value="AAA32768.1"/>
    <property type="molecule type" value="Genomic_DNA"/>
</dbReference>
<dbReference type="EMBL" id="AB006055">
    <property type="protein sequence ID" value="BAA21860.1"/>
    <property type="molecule type" value="Genomic_DNA"/>
</dbReference>
<dbReference type="EMBL" id="AB006056">
    <property type="protein sequence ID" value="BAA21861.1"/>
    <property type="molecule type" value="Genomic_DNA"/>
</dbReference>
<dbReference type="EMBL" id="AB006057">
    <property type="protein sequence ID" value="BAA21862.1"/>
    <property type="molecule type" value="Genomic_DNA"/>
</dbReference>
<dbReference type="EMBL" id="AB006058">
    <property type="protein sequence ID" value="BAA21863.1"/>
    <property type="molecule type" value="Genomic_DNA"/>
</dbReference>
<dbReference type="EMBL" id="AB006059">
    <property type="protein sequence ID" value="BAA21864.1"/>
    <property type="molecule type" value="Genomic_DNA"/>
</dbReference>
<dbReference type="EMBL" id="AB006060">
    <property type="protein sequence ID" value="BAA21865.1"/>
    <property type="molecule type" value="Genomic_DNA"/>
</dbReference>
<dbReference type="EMBL" id="AB006061">
    <property type="protein sequence ID" value="BAA21866.1"/>
    <property type="molecule type" value="Genomic_DNA"/>
</dbReference>
<dbReference type="EMBL" id="AB006062">
    <property type="protein sequence ID" value="BAA21867.1"/>
    <property type="molecule type" value="Genomic_DNA"/>
</dbReference>
<dbReference type="EMBL" id="AB006063">
    <property type="protein sequence ID" value="BAA21868.1"/>
    <property type="molecule type" value="Genomic_DNA"/>
</dbReference>
<dbReference type="EMBL" id="AB006064">
    <property type="protein sequence ID" value="BAA21869.1"/>
    <property type="molecule type" value="Genomic_DNA"/>
</dbReference>
<dbReference type="EMBL" id="AB006065">
    <property type="protein sequence ID" value="BAA21870.1"/>
    <property type="molecule type" value="Genomic_DNA"/>
</dbReference>
<dbReference type="EMBL" id="AB006066">
    <property type="protein sequence ID" value="BAA21871.1"/>
    <property type="molecule type" value="Genomic_DNA"/>
</dbReference>
<dbReference type="EMBL" id="AB006067">
    <property type="protein sequence ID" value="BAA21872.1"/>
    <property type="molecule type" value="Genomic_DNA"/>
</dbReference>
<dbReference type="EMBL" id="AB006068">
    <property type="protein sequence ID" value="BAA21873.1"/>
    <property type="molecule type" value="Genomic_DNA"/>
</dbReference>
<dbReference type="EMBL" id="AB006069">
    <property type="protein sequence ID" value="BAA21874.1"/>
    <property type="molecule type" value="Genomic_DNA"/>
</dbReference>
<dbReference type="EMBL" id="AB009056">
    <property type="protein sequence ID" value="BAB08732.1"/>
    <property type="molecule type" value="Genomic_DNA"/>
</dbReference>
<dbReference type="EMBL" id="CP002688">
    <property type="protein sequence ID" value="AED93255.1"/>
    <property type="molecule type" value="Genomic_DNA"/>
</dbReference>
<dbReference type="EMBL" id="BT020526">
    <property type="protein sequence ID" value="AAW49295.1"/>
    <property type="molecule type" value="mRNA"/>
</dbReference>
<dbReference type="EMBL" id="BT021931">
    <property type="protein sequence ID" value="AAX49380.1"/>
    <property type="molecule type" value="mRNA"/>
</dbReference>
<dbReference type="PIR" id="A45511">
    <property type="entry name" value="A45511"/>
</dbReference>
<dbReference type="RefSeq" id="NP_197797.1">
    <property type="nucleotide sequence ID" value="NM_122314.3"/>
</dbReference>
<dbReference type="SMR" id="P19172"/>
<dbReference type="FunCoup" id="P19172">
    <property type="interactions" value="373"/>
</dbReference>
<dbReference type="STRING" id="3702.P19172"/>
<dbReference type="CAZy" id="GH18">
    <property type="family name" value="Glycoside Hydrolase Family 18"/>
</dbReference>
<dbReference type="PaxDb" id="3702-AT5G24090.1"/>
<dbReference type="ProteomicsDB" id="245175"/>
<dbReference type="EnsemblPlants" id="AT5G24090.1">
    <property type="protein sequence ID" value="AT5G24090.1"/>
    <property type="gene ID" value="AT5G24090"/>
</dbReference>
<dbReference type="GeneID" id="832474"/>
<dbReference type="Gramene" id="AT5G24090.1">
    <property type="protein sequence ID" value="AT5G24090.1"/>
    <property type="gene ID" value="AT5G24090"/>
</dbReference>
<dbReference type="KEGG" id="ath:AT5G24090"/>
<dbReference type="Araport" id="AT5G24090"/>
<dbReference type="TAIR" id="AT5G24090">
    <property type="gene designation" value="CHIA"/>
</dbReference>
<dbReference type="eggNOG" id="KOG4701">
    <property type="taxonomic scope" value="Eukaryota"/>
</dbReference>
<dbReference type="HOGENOM" id="CLU_007818_0_1_1"/>
<dbReference type="InParanoid" id="P19172"/>
<dbReference type="OMA" id="SYYCQNA"/>
<dbReference type="PhylomeDB" id="P19172"/>
<dbReference type="BioCyc" id="ARA:AT5G24090-MONOMER"/>
<dbReference type="PRO" id="PR:P19172"/>
<dbReference type="Proteomes" id="UP000006548">
    <property type="component" value="Chromosome 5"/>
</dbReference>
<dbReference type="ExpressionAtlas" id="P19172">
    <property type="expression patterns" value="baseline and differential"/>
</dbReference>
<dbReference type="GO" id="GO:0005576">
    <property type="term" value="C:extracellular region"/>
    <property type="evidence" value="ECO:0007669"/>
    <property type="project" value="UniProtKB-SubCell"/>
</dbReference>
<dbReference type="GO" id="GO:0008422">
    <property type="term" value="F:beta-glucosidase activity"/>
    <property type="evidence" value="ECO:0000314"/>
    <property type="project" value="TAIR"/>
</dbReference>
<dbReference type="GO" id="GO:0008843">
    <property type="term" value="F:endochitinase activity"/>
    <property type="evidence" value="ECO:0007669"/>
    <property type="project" value="UniProtKB-EC"/>
</dbReference>
<dbReference type="GO" id="GO:0003796">
    <property type="term" value="F:lysozyme activity"/>
    <property type="evidence" value="ECO:0000315"/>
    <property type="project" value="TAIR"/>
</dbReference>
<dbReference type="GO" id="GO:0042631">
    <property type="term" value="P:cellular response to water deprivation"/>
    <property type="evidence" value="ECO:0000270"/>
    <property type="project" value="TAIR"/>
</dbReference>
<dbReference type="GO" id="GO:0006032">
    <property type="term" value="P:chitin catabolic process"/>
    <property type="evidence" value="ECO:0007669"/>
    <property type="project" value="UniProtKB-KW"/>
</dbReference>
<dbReference type="GO" id="GO:0002221">
    <property type="term" value="P:pattern recognition receptor signaling pathway"/>
    <property type="evidence" value="ECO:0000315"/>
    <property type="project" value="TAIR"/>
</dbReference>
<dbReference type="GO" id="GO:0000272">
    <property type="term" value="P:polysaccharide catabolic process"/>
    <property type="evidence" value="ECO:0007669"/>
    <property type="project" value="UniProtKB-KW"/>
</dbReference>
<dbReference type="GO" id="GO:0009409">
    <property type="term" value="P:response to cold"/>
    <property type="evidence" value="ECO:0000270"/>
    <property type="project" value="TAIR"/>
</dbReference>
<dbReference type="GO" id="GO:0009642">
    <property type="term" value="P:response to light intensity"/>
    <property type="evidence" value="ECO:0000270"/>
    <property type="project" value="TAIR"/>
</dbReference>
<dbReference type="GO" id="GO:0009651">
    <property type="term" value="P:response to salt stress"/>
    <property type="evidence" value="ECO:0000270"/>
    <property type="project" value="TAIR"/>
</dbReference>
<dbReference type="GO" id="GO:0009611">
    <property type="term" value="P:response to wounding"/>
    <property type="evidence" value="ECO:0000270"/>
    <property type="project" value="TAIR"/>
</dbReference>
<dbReference type="CDD" id="cd02877">
    <property type="entry name" value="GH18_hevamine_XipI_class_III"/>
    <property type="match status" value="1"/>
</dbReference>
<dbReference type="FunFam" id="3.20.20.80:FF:000015">
    <property type="entry name" value="Acidic endochitinase SE2"/>
    <property type="match status" value="1"/>
</dbReference>
<dbReference type="Gene3D" id="3.20.20.80">
    <property type="entry name" value="Glycosidases"/>
    <property type="match status" value="1"/>
</dbReference>
<dbReference type="InterPro" id="IPR045321">
    <property type="entry name" value="Cts1-like"/>
</dbReference>
<dbReference type="InterPro" id="IPR001223">
    <property type="entry name" value="Glyco_hydro18_cat"/>
</dbReference>
<dbReference type="InterPro" id="IPR001579">
    <property type="entry name" value="Glyco_hydro_18_chit_AS"/>
</dbReference>
<dbReference type="InterPro" id="IPR017853">
    <property type="entry name" value="Glycoside_hydrolase_SF"/>
</dbReference>
<dbReference type="InterPro" id="IPR050542">
    <property type="entry name" value="Glycosyl_Hydrlase18_Chitinase"/>
</dbReference>
<dbReference type="PANTHER" id="PTHR45708:SF21">
    <property type="entry name" value="ACIDIC ENDOCHITINASE"/>
    <property type="match status" value="1"/>
</dbReference>
<dbReference type="PANTHER" id="PTHR45708">
    <property type="entry name" value="ENDOCHITINASE"/>
    <property type="match status" value="1"/>
</dbReference>
<dbReference type="Pfam" id="PF00704">
    <property type="entry name" value="Glyco_hydro_18"/>
    <property type="match status" value="1"/>
</dbReference>
<dbReference type="SUPFAM" id="SSF51445">
    <property type="entry name" value="(Trans)glycosidases"/>
    <property type="match status" value="1"/>
</dbReference>
<dbReference type="PROSITE" id="PS01095">
    <property type="entry name" value="GH18_1"/>
    <property type="match status" value="1"/>
</dbReference>
<dbReference type="PROSITE" id="PS51910">
    <property type="entry name" value="GH18_2"/>
    <property type="match status" value="1"/>
</dbReference>
<protein>
    <recommendedName>
        <fullName>Acidic endochitinase</fullName>
        <ecNumber>3.2.1.14</ecNumber>
    </recommendedName>
</protein>
<evidence type="ECO:0000250" key="1"/>
<evidence type="ECO:0000255" key="2">
    <source>
        <dbReference type="PROSITE-ProRule" id="PRU01258"/>
    </source>
</evidence>
<evidence type="ECO:0000305" key="3"/>
<organism>
    <name type="scientific">Arabidopsis thaliana</name>
    <name type="common">Mouse-ear cress</name>
    <dbReference type="NCBI Taxonomy" id="3702"/>
    <lineage>
        <taxon>Eukaryota</taxon>
        <taxon>Viridiplantae</taxon>
        <taxon>Streptophyta</taxon>
        <taxon>Embryophyta</taxon>
        <taxon>Tracheophyta</taxon>
        <taxon>Spermatophyta</taxon>
        <taxon>Magnoliopsida</taxon>
        <taxon>eudicotyledons</taxon>
        <taxon>Gunneridae</taxon>
        <taxon>Pentapetalae</taxon>
        <taxon>rosids</taxon>
        <taxon>malvids</taxon>
        <taxon>Brassicales</taxon>
        <taxon>Brassicaceae</taxon>
        <taxon>Camelineae</taxon>
        <taxon>Arabidopsis</taxon>
    </lineage>
</organism>
<keyword id="KW-0119">Carbohydrate metabolism</keyword>
<keyword id="KW-0146">Chitin degradation</keyword>
<keyword id="KW-1015">Disulfide bond</keyword>
<keyword id="KW-0326">Glycosidase</keyword>
<keyword id="KW-0378">Hydrolase</keyword>
<keyword id="KW-0624">Polysaccharide degradation</keyword>
<keyword id="KW-1185">Reference proteome</keyword>
<keyword id="KW-0964">Secreted</keyword>
<keyword id="KW-0732">Signal</keyword>
<name>CHIA_ARATH</name>
<feature type="signal peptide">
    <location>
        <begin position="1"/>
        <end position="30"/>
    </location>
</feature>
<feature type="chain" id="PRO_0000011913" description="Acidic endochitinase">
    <location>
        <begin position="31"/>
        <end position="302"/>
    </location>
</feature>
<feature type="domain" description="GH18" evidence="2">
    <location>
        <begin position="31"/>
        <end position="302"/>
    </location>
</feature>
<feature type="active site" description="Proton donor" evidence="2">
    <location>
        <position position="156"/>
    </location>
</feature>
<feature type="disulfide bond" evidence="1">
    <location>
        <begin position="49"/>
        <end position="96"/>
    </location>
</feature>
<feature type="disulfide bond" evidence="1">
    <location>
        <begin position="79"/>
        <end position="86"/>
    </location>
</feature>
<feature type="disulfide bond" evidence="1">
    <location>
        <begin position="188"/>
        <end position="217"/>
    </location>
</feature>
<feature type="sequence variant" description="In strain: cv. Ci-0.">
    <original>S</original>
    <variation>T</variation>
    <location>
        <position position="22"/>
    </location>
</feature>
<feature type="sequence variant" description="In strain: cv. Es-0.">
    <original>E</original>
    <variation>A</variation>
    <location>
        <position position="42"/>
    </location>
</feature>
<feature type="sequence variant" description="In strain: cv. Ci-0.">
    <original>Q</original>
    <variation>R</variation>
    <location>
        <position position="69"/>
    </location>
</feature>
<feature type="sequence variant" description="In strain: cv. Ci-0.">
    <original>E</original>
    <variation>K</variation>
    <location>
        <position position="120"/>
    </location>
</feature>
<feature type="sequence variant" description="In strain: cv. Ci-0.">
    <original>I</original>
    <variation>V</variation>
    <location>
        <position position="125"/>
    </location>
</feature>
<feature type="sequence variant" description="In strain: cv. Ci-0, cv. Ita-0 and cv. Pog-0.">
    <original>T</original>
    <variation>S</variation>
    <location>
        <position position="169"/>
    </location>
</feature>
<feature type="sequence variant" description="In strain: cv. Ci-0.">
    <original>F</original>
    <variation>Y</variation>
    <location>
        <position position="173"/>
    </location>
</feature>
<feature type="sequence variant" description="In strain: cv. Yo-0.">
    <original>S</original>
    <variation>T</variation>
    <location>
        <position position="174"/>
    </location>
</feature>
<feature type="sequence variant" description="In strain: cv. Ita-0 and cv. Pog-0.">
    <original>I</original>
    <variation>V</variation>
    <location>
        <position position="180"/>
    </location>
</feature>
<feature type="sequence variant" description="In strain: cv. Mt-0.">
    <original>C</original>
    <variation>W</variation>
    <location>
        <position position="217"/>
    </location>
</feature>
<feature type="sequence variant" description="In strain: cv. Ita-0 and cv. Pog-0.">
    <original>S</original>
    <variation>T</variation>
    <location>
        <position position="220"/>
    </location>
</feature>
<feature type="sequence variant" description="In strain: cv. Chi-0.">
    <original>A</original>
    <variation>T</variation>
    <location>
        <position position="239"/>
    </location>
</feature>
<feature type="sequence variant" description="In strain: cv. Ita-0.">
    <original>F</original>
    <variation>I</variation>
    <location>
        <position position="243"/>
    </location>
</feature>
<feature type="sequence variant" description="In strain: cv. Pog-0.">
    <original>F</original>
    <variation>L</variation>
    <location>
        <position position="243"/>
    </location>
</feature>
<feature type="sequence variant" description="In strain: cv. Yo-0.">
    <original>G</original>
    <variation>V</variation>
    <location>
        <position position="257"/>
    </location>
</feature>
<feature type="sequence variant" description="In strain: cv. Ci-0.">
    <original>K</original>
    <variation>N</variation>
    <location>
        <position position="274"/>
    </location>
</feature>
<feature type="sequence variant" description="In strain: cv. Bla-10.">
    <original>L</original>
    <variation>S</variation>
    <location>
        <position position="299"/>
    </location>
</feature>
<feature type="sequence variant" description="In strain: cv. Bs-1.">
    <original>L</original>
    <variation>V</variation>
    <location>
        <position position="299"/>
    </location>
</feature>
<feature type="sequence conflict" description="In Ref. 1; AAA32768." evidence="3" ref="1">
    <original>G</original>
    <variation>D</variation>
    <location>
        <position position="255"/>
    </location>
</feature>
<sequence>MTNMTLRKHVIYFLFFISCSLSKPSDASRGGIAIYWGQNGNEGNLSATCATGRYAYVNVAFLVKFGNGQTPELNLAGHCNPAANTCTHFGSQVKDCQSRGIKVMLSLGGGIGNYSIGSREDAKVIADYLWNNFLGGKSSSRPLGDAVLDGIDFNIELGSPQHWDDLARTLSKFSHRGRKIYLTGAPQCPFPDRLMGSALNTKRFDYVWIQFYNNPPCSYSSGNTQNLFDSWNKWTTSIAAQKFFLGLPAAPEAAGSGYIPPDVLTSQILPTLKKSRKYGGVMLWSKFWDDKNGYSSSILASV</sequence>
<accession>P19172</accession>
<accession>O22065</accession>
<accession>O22066</accession>
<accession>O22067</accession>
<accession>O22068</accession>
<accession>O22069</accession>
<accession>O22070</accession>
<accession>O22071</accession>
<accession>O22072</accession>
<accession>O22073</accession>
<accession>O24614</accession>
<accession>Q5HYZ8</accession>
<proteinExistence type="evidence at transcript level"/>
<reference key="1">
    <citation type="journal article" date="1990" name="Plant Physiol.">
        <title>Isolation and characterization of the genes encoding basic and acidic chitinase in Arabidopsis thaliana.</title>
        <authorList>
            <person name="Samac D.A."/>
            <person name="Hironaka C.M."/>
            <person name="Yallaly P.E."/>
            <person name="Shah D.M."/>
        </authorList>
    </citation>
    <scope>NUCLEOTIDE SEQUENCE [GENOMIC DNA]</scope>
    <source>
        <strain>cv. Columbia</strain>
    </source>
</reference>
<reference key="2">
    <citation type="journal article" date="1997" name="Mol. Biol. Evol.">
        <title>Nucleotide polymorphism in the acidic chitinase locus (ChiA) region of the wild plant Arabidopsis thaliana.</title>
        <authorList>
            <person name="Kawabe A."/>
            <person name="Innan H."/>
            <person name="Terauchi R."/>
            <person name="Miyashita N.T."/>
        </authorList>
    </citation>
    <scope>NUCLEOTIDE SEQUENCE [GENOMIC DNA]</scope>
    <scope>POLYMORPHISM</scope>
    <source>
        <strain>cv. Al-0</strain>
        <strain>cv. Bl-1</strain>
        <strain>cv. Bla-10</strain>
        <strain>cv. Bs-1</strain>
        <strain>cv. Chi-0</strain>
        <strain>cv. Ci-0</strain>
        <strain>cv. Es-0</strain>
        <strain>cv. Gr-1</strain>
        <strain>cv. Hiroshima</strain>
        <strain>cv. Ita-0</strain>
        <strain>cv. Kn-0</strain>
        <strain>cv. Mt-0</strain>
        <strain>cv. Pog-0</strain>
        <strain>cv. Shokei</strain>
        <strain>cv. Yo-0</strain>
    </source>
</reference>
<reference key="3">
    <citation type="journal article" date="1998" name="DNA Res.">
        <title>Structural analysis of Arabidopsis thaliana chromosome 5. IV. Sequence features of the regions of 1,456,315 bp covered by nineteen physically assigned P1 and TAC clones.</title>
        <authorList>
            <person name="Sato S."/>
            <person name="Kaneko T."/>
            <person name="Kotani H."/>
            <person name="Nakamura Y."/>
            <person name="Asamizu E."/>
            <person name="Miyajima N."/>
            <person name="Tabata S."/>
        </authorList>
    </citation>
    <scope>NUCLEOTIDE SEQUENCE [LARGE SCALE GENOMIC DNA]</scope>
    <source>
        <strain>cv. Columbia</strain>
    </source>
</reference>
<reference key="4">
    <citation type="journal article" date="2017" name="Plant J.">
        <title>Araport11: a complete reannotation of the Arabidopsis thaliana reference genome.</title>
        <authorList>
            <person name="Cheng C.Y."/>
            <person name="Krishnakumar V."/>
            <person name="Chan A.P."/>
            <person name="Thibaud-Nissen F."/>
            <person name="Schobel S."/>
            <person name="Town C.D."/>
        </authorList>
    </citation>
    <scope>GENOME REANNOTATION</scope>
    <source>
        <strain>cv. Columbia</strain>
    </source>
</reference>
<reference key="5">
    <citation type="submission" date="2005-03" db="EMBL/GenBank/DDBJ databases">
        <title>Arabidopsis ORF clones.</title>
        <authorList>
            <person name="Kim C.J."/>
            <person name="Chen H."/>
            <person name="Cheuk R.F."/>
            <person name="Shinn P."/>
            <person name="Ecker J.R."/>
        </authorList>
    </citation>
    <scope>NUCLEOTIDE SEQUENCE [LARGE SCALE MRNA]</scope>
    <source>
        <strain>cv. Columbia</strain>
    </source>
</reference>